<dbReference type="EC" id="5.4.2.11" evidence="1"/>
<dbReference type="EMBL" id="AM711867">
    <property type="protein sequence ID" value="CAN02576.1"/>
    <property type="molecule type" value="Genomic_DNA"/>
</dbReference>
<dbReference type="RefSeq" id="WP_012039183.1">
    <property type="nucleotide sequence ID" value="NC_009480.1"/>
</dbReference>
<dbReference type="SMR" id="A5CTZ0"/>
<dbReference type="KEGG" id="cmi:CMM_2495"/>
<dbReference type="eggNOG" id="COG0588">
    <property type="taxonomic scope" value="Bacteria"/>
</dbReference>
<dbReference type="HOGENOM" id="CLU_033323_1_1_11"/>
<dbReference type="OrthoDB" id="9781415at2"/>
<dbReference type="UniPathway" id="UPA00109">
    <property type="reaction ID" value="UER00186"/>
</dbReference>
<dbReference type="Proteomes" id="UP000001564">
    <property type="component" value="Chromosome"/>
</dbReference>
<dbReference type="GO" id="GO:0004619">
    <property type="term" value="F:phosphoglycerate mutase activity"/>
    <property type="evidence" value="ECO:0007669"/>
    <property type="project" value="UniProtKB-EC"/>
</dbReference>
<dbReference type="GO" id="GO:0006094">
    <property type="term" value="P:gluconeogenesis"/>
    <property type="evidence" value="ECO:0007669"/>
    <property type="project" value="UniProtKB-UniRule"/>
</dbReference>
<dbReference type="GO" id="GO:0006096">
    <property type="term" value="P:glycolytic process"/>
    <property type="evidence" value="ECO:0007669"/>
    <property type="project" value="UniProtKB-UniRule"/>
</dbReference>
<dbReference type="CDD" id="cd07067">
    <property type="entry name" value="HP_PGM_like"/>
    <property type="match status" value="1"/>
</dbReference>
<dbReference type="FunFam" id="3.40.50.1240:FF:000003">
    <property type="entry name" value="2,3-bisphosphoglycerate-dependent phosphoglycerate mutase"/>
    <property type="match status" value="1"/>
</dbReference>
<dbReference type="Gene3D" id="3.40.50.1240">
    <property type="entry name" value="Phosphoglycerate mutase-like"/>
    <property type="match status" value="1"/>
</dbReference>
<dbReference type="HAMAP" id="MF_01039">
    <property type="entry name" value="PGAM_GpmA"/>
    <property type="match status" value="1"/>
</dbReference>
<dbReference type="InterPro" id="IPR013078">
    <property type="entry name" value="His_Pase_superF_clade-1"/>
</dbReference>
<dbReference type="InterPro" id="IPR029033">
    <property type="entry name" value="His_PPase_superfam"/>
</dbReference>
<dbReference type="InterPro" id="IPR005952">
    <property type="entry name" value="Phosphogly_mut1"/>
</dbReference>
<dbReference type="NCBIfam" id="TIGR01258">
    <property type="entry name" value="pgm_1"/>
    <property type="match status" value="1"/>
</dbReference>
<dbReference type="NCBIfam" id="NF010713">
    <property type="entry name" value="PRK14115.1"/>
    <property type="match status" value="1"/>
</dbReference>
<dbReference type="NCBIfam" id="NF010718">
    <property type="entry name" value="PRK14120.1"/>
    <property type="match status" value="1"/>
</dbReference>
<dbReference type="PANTHER" id="PTHR11931">
    <property type="entry name" value="PHOSPHOGLYCERATE MUTASE"/>
    <property type="match status" value="1"/>
</dbReference>
<dbReference type="Pfam" id="PF00300">
    <property type="entry name" value="His_Phos_1"/>
    <property type="match status" value="2"/>
</dbReference>
<dbReference type="PIRSF" id="PIRSF000709">
    <property type="entry name" value="6PFK_2-Ptase"/>
    <property type="match status" value="1"/>
</dbReference>
<dbReference type="SMART" id="SM00855">
    <property type="entry name" value="PGAM"/>
    <property type="match status" value="1"/>
</dbReference>
<dbReference type="SUPFAM" id="SSF53254">
    <property type="entry name" value="Phosphoglycerate mutase-like"/>
    <property type="match status" value="1"/>
</dbReference>
<organism>
    <name type="scientific">Clavibacter michiganensis subsp. michiganensis (strain NCPPB 382)</name>
    <dbReference type="NCBI Taxonomy" id="443906"/>
    <lineage>
        <taxon>Bacteria</taxon>
        <taxon>Bacillati</taxon>
        <taxon>Actinomycetota</taxon>
        <taxon>Actinomycetes</taxon>
        <taxon>Micrococcales</taxon>
        <taxon>Microbacteriaceae</taxon>
        <taxon>Clavibacter</taxon>
    </lineage>
</organism>
<sequence length="251" mass="27716">MAEPRTLVLLRHGNSDWNQKNLFTGWVDVELSEQGVAEGQRAGELLAESGILPDVLHTSVLIRAIDTANIALKRAGRSWIPVQRTWRLNERHYGALQGKDKAQTLAEYGPEQFATWRRSFDVPPPPIDDDDEYSQSRDPRYADLGDALPRTECLKDVIERMLPYWESDIQPDLASGRTVLVTAHGNSLRALVKHLDGISDADIAELNIPTGIPLVYRLDEDYRPIVPGGEYLDPEAAAAGAAAVAAQGSKK</sequence>
<comment type="function">
    <text evidence="1">Catalyzes the interconversion of 2-phosphoglycerate and 3-phosphoglycerate.</text>
</comment>
<comment type="catalytic activity">
    <reaction evidence="1">
        <text>(2R)-2-phosphoglycerate = (2R)-3-phosphoglycerate</text>
        <dbReference type="Rhea" id="RHEA:15901"/>
        <dbReference type="ChEBI" id="CHEBI:58272"/>
        <dbReference type="ChEBI" id="CHEBI:58289"/>
        <dbReference type="EC" id="5.4.2.11"/>
    </reaction>
</comment>
<comment type="pathway">
    <text evidence="1">Carbohydrate degradation; glycolysis; pyruvate from D-glyceraldehyde 3-phosphate: step 3/5.</text>
</comment>
<comment type="similarity">
    <text evidence="1">Belongs to the phosphoglycerate mutase family. BPG-dependent PGAM subfamily.</text>
</comment>
<reference key="1">
    <citation type="journal article" date="2008" name="J. Bacteriol.">
        <title>The genome sequence of the tomato-pathogenic actinomycete Clavibacter michiganensis subsp. michiganensis NCPPB382 reveals a large island involved in pathogenicity.</title>
        <authorList>
            <person name="Gartemann K.-H."/>
            <person name="Abt B."/>
            <person name="Bekel T."/>
            <person name="Burger A."/>
            <person name="Engemann J."/>
            <person name="Fluegel M."/>
            <person name="Gaigalat L."/>
            <person name="Goesmann A."/>
            <person name="Graefen I."/>
            <person name="Kalinowski J."/>
            <person name="Kaup O."/>
            <person name="Kirchner O."/>
            <person name="Krause L."/>
            <person name="Linke B."/>
            <person name="McHardy A."/>
            <person name="Meyer F."/>
            <person name="Pohle S."/>
            <person name="Rueckert C."/>
            <person name="Schneiker S."/>
            <person name="Zellermann E.-M."/>
            <person name="Puehler A."/>
            <person name="Eichenlaub R."/>
            <person name="Kaiser O."/>
            <person name="Bartels D."/>
        </authorList>
    </citation>
    <scope>NUCLEOTIDE SEQUENCE [LARGE SCALE GENOMIC DNA]</scope>
    <source>
        <strain>NCPPB 382</strain>
    </source>
</reference>
<evidence type="ECO:0000255" key="1">
    <source>
        <dbReference type="HAMAP-Rule" id="MF_01039"/>
    </source>
</evidence>
<evidence type="ECO:0000256" key="2">
    <source>
        <dbReference type="SAM" id="MobiDB-lite"/>
    </source>
</evidence>
<feature type="chain" id="PRO_1000064049" description="2,3-bisphosphoglycerate-dependent phosphoglycerate mutase">
    <location>
        <begin position="1"/>
        <end position="251"/>
    </location>
</feature>
<feature type="region of interest" description="Disordered" evidence="2">
    <location>
        <begin position="117"/>
        <end position="142"/>
    </location>
</feature>
<feature type="active site" description="Tele-phosphohistidine intermediate" evidence="1">
    <location>
        <position position="12"/>
    </location>
</feature>
<feature type="active site" description="Proton donor/acceptor" evidence="1">
    <location>
        <position position="90"/>
    </location>
</feature>
<feature type="binding site" evidence="1">
    <location>
        <begin position="11"/>
        <end position="18"/>
    </location>
    <ligand>
        <name>substrate</name>
    </ligand>
</feature>
<feature type="binding site" evidence="1">
    <location>
        <begin position="24"/>
        <end position="25"/>
    </location>
    <ligand>
        <name>substrate</name>
    </ligand>
</feature>
<feature type="binding site" evidence="1">
    <location>
        <position position="63"/>
    </location>
    <ligand>
        <name>substrate</name>
    </ligand>
</feature>
<feature type="binding site" evidence="1">
    <location>
        <begin position="90"/>
        <end position="93"/>
    </location>
    <ligand>
        <name>substrate</name>
    </ligand>
</feature>
<feature type="binding site" evidence="1">
    <location>
        <position position="101"/>
    </location>
    <ligand>
        <name>substrate</name>
    </ligand>
</feature>
<feature type="binding site" evidence="1">
    <location>
        <begin position="117"/>
        <end position="118"/>
    </location>
    <ligand>
        <name>substrate</name>
    </ligand>
</feature>
<feature type="binding site" evidence="1">
    <location>
        <begin position="185"/>
        <end position="186"/>
    </location>
    <ligand>
        <name>substrate</name>
    </ligand>
</feature>
<feature type="site" description="Transition state stabilizer" evidence="1">
    <location>
        <position position="184"/>
    </location>
</feature>
<gene>
    <name evidence="1" type="primary">gpmA</name>
    <name type="ordered locus">CMM_2495</name>
</gene>
<proteinExistence type="inferred from homology"/>
<accession>A5CTZ0</accession>
<name>GPMA_CLAM3</name>
<protein>
    <recommendedName>
        <fullName evidence="1">2,3-bisphosphoglycerate-dependent phosphoglycerate mutase</fullName>
        <shortName evidence="1">BPG-dependent PGAM</shortName>
        <shortName evidence="1">PGAM</shortName>
        <shortName evidence="1">Phosphoglyceromutase</shortName>
        <shortName evidence="1">dPGM</shortName>
        <ecNumber evidence="1">5.4.2.11</ecNumber>
    </recommendedName>
</protein>
<keyword id="KW-0312">Gluconeogenesis</keyword>
<keyword id="KW-0324">Glycolysis</keyword>
<keyword id="KW-0413">Isomerase</keyword>